<keyword id="KW-1185">Reference proteome</keyword>
<keyword id="KW-0687">Ribonucleoprotein</keyword>
<keyword id="KW-0689">Ribosomal protein</keyword>
<feature type="chain" id="PRO_1000205627" description="Large ribosomal subunit protein uL29">
    <location>
        <begin position="1"/>
        <end position="67"/>
    </location>
</feature>
<dbReference type="EMBL" id="AP009153">
    <property type="protein sequence ID" value="BAH37923.1"/>
    <property type="molecule type" value="Genomic_DNA"/>
</dbReference>
<dbReference type="RefSeq" id="WP_012682370.1">
    <property type="nucleotide sequence ID" value="NC_012489.1"/>
</dbReference>
<dbReference type="SMR" id="C1A6R3"/>
<dbReference type="STRING" id="379066.GAU_0881"/>
<dbReference type="KEGG" id="gau:GAU_0881"/>
<dbReference type="eggNOG" id="COG0255">
    <property type="taxonomic scope" value="Bacteria"/>
</dbReference>
<dbReference type="HOGENOM" id="CLU_158491_5_2_0"/>
<dbReference type="OrthoDB" id="9815192at2"/>
<dbReference type="Proteomes" id="UP000002209">
    <property type="component" value="Chromosome"/>
</dbReference>
<dbReference type="GO" id="GO:0022625">
    <property type="term" value="C:cytosolic large ribosomal subunit"/>
    <property type="evidence" value="ECO:0007669"/>
    <property type="project" value="TreeGrafter"/>
</dbReference>
<dbReference type="GO" id="GO:0003735">
    <property type="term" value="F:structural constituent of ribosome"/>
    <property type="evidence" value="ECO:0007669"/>
    <property type="project" value="InterPro"/>
</dbReference>
<dbReference type="GO" id="GO:0006412">
    <property type="term" value="P:translation"/>
    <property type="evidence" value="ECO:0007669"/>
    <property type="project" value="UniProtKB-UniRule"/>
</dbReference>
<dbReference type="CDD" id="cd00427">
    <property type="entry name" value="Ribosomal_L29_HIP"/>
    <property type="match status" value="1"/>
</dbReference>
<dbReference type="FunFam" id="1.10.287.310:FF:000001">
    <property type="entry name" value="50S ribosomal protein L29"/>
    <property type="match status" value="1"/>
</dbReference>
<dbReference type="Gene3D" id="1.10.287.310">
    <property type="match status" value="1"/>
</dbReference>
<dbReference type="HAMAP" id="MF_00374">
    <property type="entry name" value="Ribosomal_uL29"/>
    <property type="match status" value="1"/>
</dbReference>
<dbReference type="InterPro" id="IPR050063">
    <property type="entry name" value="Ribosomal_protein_uL29"/>
</dbReference>
<dbReference type="InterPro" id="IPR001854">
    <property type="entry name" value="Ribosomal_uL29"/>
</dbReference>
<dbReference type="InterPro" id="IPR036049">
    <property type="entry name" value="Ribosomal_uL29_sf"/>
</dbReference>
<dbReference type="NCBIfam" id="TIGR00012">
    <property type="entry name" value="L29"/>
    <property type="match status" value="1"/>
</dbReference>
<dbReference type="PANTHER" id="PTHR10916">
    <property type="entry name" value="60S RIBOSOMAL PROTEIN L35/50S RIBOSOMAL PROTEIN L29"/>
    <property type="match status" value="1"/>
</dbReference>
<dbReference type="PANTHER" id="PTHR10916:SF0">
    <property type="entry name" value="LARGE RIBOSOMAL SUBUNIT PROTEIN UL29C"/>
    <property type="match status" value="1"/>
</dbReference>
<dbReference type="Pfam" id="PF00831">
    <property type="entry name" value="Ribosomal_L29"/>
    <property type="match status" value="1"/>
</dbReference>
<dbReference type="SUPFAM" id="SSF46561">
    <property type="entry name" value="Ribosomal protein L29 (L29p)"/>
    <property type="match status" value="1"/>
</dbReference>
<name>RL29_GEMAT</name>
<evidence type="ECO:0000255" key="1">
    <source>
        <dbReference type="HAMAP-Rule" id="MF_00374"/>
    </source>
</evidence>
<evidence type="ECO:0000305" key="2"/>
<protein>
    <recommendedName>
        <fullName evidence="1">Large ribosomal subunit protein uL29</fullName>
    </recommendedName>
    <alternativeName>
        <fullName evidence="2">50S ribosomal protein L29</fullName>
    </alternativeName>
</protein>
<sequence>MKAEEIRGLADDELVARVLELEEERFRLRFRSGTEALEEPLRLRSIRRDIARLKTVQRERQLAARGR</sequence>
<organism>
    <name type="scientific">Gemmatimonas aurantiaca (strain DSM 14586 / JCM 11422 / NBRC 100505 / T-27)</name>
    <dbReference type="NCBI Taxonomy" id="379066"/>
    <lineage>
        <taxon>Bacteria</taxon>
        <taxon>Pseudomonadati</taxon>
        <taxon>Gemmatimonadota</taxon>
        <taxon>Gemmatimonadia</taxon>
        <taxon>Gemmatimonadales</taxon>
        <taxon>Gemmatimonadaceae</taxon>
        <taxon>Gemmatimonas</taxon>
    </lineage>
</organism>
<proteinExistence type="inferred from homology"/>
<accession>C1A6R3</accession>
<comment type="similarity">
    <text evidence="1">Belongs to the universal ribosomal protein uL29 family.</text>
</comment>
<reference key="1">
    <citation type="submission" date="2006-03" db="EMBL/GenBank/DDBJ databases">
        <title>Complete genome sequence of Gemmatimonas aurantiaca T-27 that represents a novel phylum Gemmatimonadetes.</title>
        <authorList>
            <person name="Takasaki K."/>
            <person name="Ichikawa N."/>
            <person name="Miura H."/>
            <person name="Matsushita S."/>
            <person name="Watanabe Y."/>
            <person name="Oguchi A."/>
            <person name="Ankai A."/>
            <person name="Yashiro I."/>
            <person name="Takahashi M."/>
            <person name="Terui Y."/>
            <person name="Fukui S."/>
            <person name="Yokoyama H."/>
            <person name="Tanikawa S."/>
            <person name="Hanada S."/>
            <person name="Kamagata Y."/>
            <person name="Fujita N."/>
        </authorList>
    </citation>
    <scope>NUCLEOTIDE SEQUENCE [LARGE SCALE GENOMIC DNA]</scope>
    <source>
        <strain>DSM 14586 / JCM 11422 / NBRC 100505 / T-27</strain>
    </source>
</reference>
<gene>
    <name evidence="1" type="primary">rpmC</name>
    <name type="ordered locus">GAU_0881</name>
</gene>